<comment type="similarity">
    <text evidence="1">Belongs to the bacterial ribosomal protein bS16 family.</text>
</comment>
<proteinExistence type="inferred from homology"/>
<sequence>MVKLRLKRIGKKQAPFYRIVVADSRVNRNGQYIELVGTFNPLKDEVKIDNELTLKWLNNGAQPTDTVRSLLSKQGILKALHESKFSKNTQTENKKPVSKKTTKKSKDN</sequence>
<protein>
    <recommendedName>
        <fullName evidence="1">Small ribosomal subunit protein bS16</fullName>
    </recommendedName>
    <alternativeName>
        <fullName evidence="3">30S ribosomal protein S16</fullName>
    </alternativeName>
</protein>
<evidence type="ECO:0000255" key="1">
    <source>
        <dbReference type="HAMAP-Rule" id="MF_00385"/>
    </source>
</evidence>
<evidence type="ECO:0000256" key="2">
    <source>
        <dbReference type="SAM" id="MobiDB-lite"/>
    </source>
</evidence>
<evidence type="ECO:0000305" key="3"/>
<keyword id="KW-1185">Reference proteome</keyword>
<keyword id="KW-0687">Ribonucleoprotein</keyword>
<keyword id="KW-0689">Ribosomal protein</keyword>
<name>RS16_MYCMS</name>
<accession>P62233</accession>
<reference key="1">
    <citation type="journal article" date="2004" name="Genome Res.">
        <title>The genome sequence of Mycoplasma mycoides subsp. mycoides SC type strain PG1T, the causative agent of contagious bovine pleuropneumonia (CBPP).</title>
        <authorList>
            <person name="Westberg J."/>
            <person name="Persson A."/>
            <person name="Holmberg A."/>
            <person name="Goesmann A."/>
            <person name="Lundeberg J."/>
            <person name="Johansson K.-E."/>
            <person name="Pettersson B."/>
            <person name="Uhlen M."/>
        </authorList>
    </citation>
    <scope>NUCLEOTIDE SEQUENCE [LARGE SCALE GENOMIC DNA]</scope>
    <source>
        <strain>CCUG 32753 / NCTC 10114 / PG1</strain>
    </source>
</reference>
<organism>
    <name type="scientific">Mycoplasma mycoides subsp. mycoides SC (strain CCUG 32753 / NCTC 10114 / PG1)</name>
    <dbReference type="NCBI Taxonomy" id="272632"/>
    <lineage>
        <taxon>Bacteria</taxon>
        <taxon>Bacillati</taxon>
        <taxon>Mycoplasmatota</taxon>
        <taxon>Mollicutes</taxon>
        <taxon>Mycoplasmataceae</taxon>
        <taxon>Mycoplasma</taxon>
    </lineage>
</organism>
<feature type="chain" id="PRO_0000167208" description="Small ribosomal subunit protein bS16">
    <location>
        <begin position="1"/>
        <end position="108"/>
    </location>
</feature>
<feature type="region of interest" description="Disordered" evidence="2">
    <location>
        <begin position="82"/>
        <end position="108"/>
    </location>
</feature>
<feature type="compositionally biased region" description="Basic residues" evidence="2">
    <location>
        <begin position="96"/>
        <end position="108"/>
    </location>
</feature>
<dbReference type="EMBL" id="BX293980">
    <property type="protein sequence ID" value="CAE77053.1"/>
    <property type="molecule type" value="Genomic_DNA"/>
</dbReference>
<dbReference type="RefSeq" id="NP_975411.1">
    <property type="nucleotide sequence ID" value="NC_005364.2"/>
</dbReference>
<dbReference type="RefSeq" id="WP_011166609.1">
    <property type="nucleotide sequence ID" value="NC_005364.2"/>
</dbReference>
<dbReference type="SMR" id="P62233"/>
<dbReference type="STRING" id="272632.MSC_0425"/>
<dbReference type="KEGG" id="mmy:MSC_0425"/>
<dbReference type="PATRIC" id="fig|272632.4.peg.463"/>
<dbReference type="eggNOG" id="COG0228">
    <property type="taxonomic scope" value="Bacteria"/>
</dbReference>
<dbReference type="HOGENOM" id="CLU_100590_5_2_14"/>
<dbReference type="Proteomes" id="UP000001016">
    <property type="component" value="Chromosome"/>
</dbReference>
<dbReference type="GO" id="GO:0005737">
    <property type="term" value="C:cytoplasm"/>
    <property type="evidence" value="ECO:0007669"/>
    <property type="project" value="UniProtKB-ARBA"/>
</dbReference>
<dbReference type="GO" id="GO:0015935">
    <property type="term" value="C:small ribosomal subunit"/>
    <property type="evidence" value="ECO:0007669"/>
    <property type="project" value="TreeGrafter"/>
</dbReference>
<dbReference type="GO" id="GO:0003735">
    <property type="term" value="F:structural constituent of ribosome"/>
    <property type="evidence" value="ECO:0007669"/>
    <property type="project" value="InterPro"/>
</dbReference>
<dbReference type="GO" id="GO:0006412">
    <property type="term" value="P:translation"/>
    <property type="evidence" value="ECO:0007669"/>
    <property type="project" value="UniProtKB-UniRule"/>
</dbReference>
<dbReference type="Gene3D" id="3.30.1320.10">
    <property type="match status" value="1"/>
</dbReference>
<dbReference type="HAMAP" id="MF_00385">
    <property type="entry name" value="Ribosomal_bS16"/>
    <property type="match status" value="1"/>
</dbReference>
<dbReference type="InterPro" id="IPR000307">
    <property type="entry name" value="Ribosomal_bS16"/>
</dbReference>
<dbReference type="InterPro" id="IPR020592">
    <property type="entry name" value="Ribosomal_bS16_CS"/>
</dbReference>
<dbReference type="InterPro" id="IPR023803">
    <property type="entry name" value="Ribosomal_bS16_dom_sf"/>
</dbReference>
<dbReference type="NCBIfam" id="TIGR00002">
    <property type="entry name" value="S16"/>
    <property type="match status" value="1"/>
</dbReference>
<dbReference type="PANTHER" id="PTHR12919">
    <property type="entry name" value="30S RIBOSOMAL PROTEIN S16"/>
    <property type="match status" value="1"/>
</dbReference>
<dbReference type="PANTHER" id="PTHR12919:SF20">
    <property type="entry name" value="SMALL RIBOSOMAL SUBUNIT PROTEIN BS16M"/>
    <property type="match status" value="1"/>
</dbReference>
<dbReference type="Pfam" id="PF00886">
    <property type="entry name" value="Ribosomal_S16"/>
    <property type="match status" value="1"/>
</dbReference>
<dbReference type="SUPFAM" id="SSF54565">
    <property type="entry name" value="Ribosomal protein S16"/>
    <property type="match status" value="1"/>
</dbReference>
<dbReference type="PROSITE" id="PS00732">
    <property type="entry name" value="RIBOSOMAL_S16"/>
    <property type="match status" value="1"/>
</dbReference>
<gene>
    <name evidence="1" type="primary">rpsP</name>
    <name type="ordered locus">MSC_0425</name>
</gene>